<comment type="function">
    <text evidence="1">Catalyzes the reversible isomerization-deamination of glucosamine 6-phosphate (GlcN6P) to form fructose 6-phosphate (Fru6P) and ammonium ion.</text>
</comment>
<comment type="catalytic activity">
    <reaction evidence="1">
        <text>alpha-D-glucosamine 6-phosphate + H2O = beta-D-fructose 6-phosphate + NH4(+)</text>
        <dbReference type="Rhea" id="RHEA:12172"/>
        <dbReference type="ChEBI" id="CHEBI:15377"/>
        <dbReference type="ChEBI" id="CHEBI:28938"/>
        <dbReference type="ChEBI" id="CHEBI:57634"/>
        <dbReference type="ChEBI" id="CHEBI:75989"/>
        <dbReference type="EC" id="3.5.99.6"/>
    </reaction>
</comment>
<comment type="pathway">
    <text evidence="1">Amino-sugar metabolism; N-acetylneuraminate degradation; D-fructose 6-phosphate from N-acetylneuraminate: step 5/5.</text>
</comment>
<comment type="similarity">
    <text evidence="1">Belongs to the glucosamine/galactosamine-6-phosphate isomerase family. NagB subfamily.</text>
</comment>
<organism>
    <name type="scientific">Bacillus anthracis (strain A0248)</name>
    <dbReference type="NCBI Taxonomy" id="592021"/>
    <lineage>
        <taxon>Bacteria</taxon>
        <taxon>Bacillati</taxon>
        <taxon>Bacillota</taxon>
        <taxon>Bacilli</taxon>
        <taxon>Bacillales</taxon>
        <taxon>Bacillaceae</taxon>
        <taxon>Bacillus</taxon>
        <taxon>Bacillus cereus group</taxon>
    </lineage>
</organism>
<protein>
    <recommendedName>
        <fullName evidence="1">Glucosamine-6-phosphate deaminase</fullName>
        <ecNumber evidence="1">3.5.99.6</ecNumber>
    </recommendedName>
    <alternativeName>
        <fullName evidence="1">GlcN6P deaminase</fullName>
        <shortName evidence="1">GNPDA</shortName>
    </alternativeName>
    <alternativeName>
        <fullName evidence="1">Glucosamine-6-phosphate isomerase</fullName>
    </alternativeName>
</protein>
<accession>C3P761</accession>
<evidence type="ECO:0000255" key="1">
    <source>
        <dbReference type="HAMAP-Rule" id="MF_01241"/>
    </source>
</evidence>
<name>NAGB_BACAA</name>
<keyword id="KW-0119">Carbohydrate metabolism</keyword>
<keyword id="KW-0378">Hydrolase</keyword>
<reference key="1">
    <citation type="submission" date="2009-04" db="EMBL/GenBank/DDBJ databases">
        <title>Genome sequence of Bacillus anthracis A0248.</title>
        <authorList>
            <person name="Dodson R.J."/>
            <person name="Munk A.C."/>
            <person name="Bruce D."/>
            <person name="Detter C."/>
            <person name="Tapia R."/>
            <person name="Sutton G."/>
            <person name="Sims D."/>
            <person name="Brettin T."/>
        </authorList>
    </citation>
    <scope>NUCLEOTIDE SEQUENCE [LARGE SCALE GENOMIC DNA]</scope>
    <source>
        <strain>A0248</strain>
    </source>
</reference>
<dbReference type="EC" id="3.5.99.6" evidence="1"/>
<dbReference type="EMBL" id="CP001598">
    <property type="protein sequence ID" value="ACQ48643.1"/>
    <property type="molecule type" value="Genomic_DNA"/>
</dbReference>
<dbReference type="RefSeq" id="WP_001024206.1">
    <property type="nucleotide sequence ID" value="NC_012659.1"/>
</dbReference>
<dbReference type="SMR" id="C3P761"/>
<dbReference type="GeneID" id="75087199"/>
<dbReference type="KEGG" id="bai:BAA_4296"/>
<dbReference type="HOGENOM" id="CLU_049611_1_0_9"/>
<dbReference type="UniPathway" id="UPA00629">
    <property type="reaction ID" value="UER00684"/>
</dbReference>
<dbReference type="GO" id="GO:0005737">
    <property type="term" value="C:cytoplasm"/>
    <property type="evidence" value="ECO:0007669"/>
    <property type="project" value="TreeGrafter"/>
</dbReference>
<dbReference type="GO" id="GO:0004342">
    <property type="term" value="F:glucosamine-6-phosphate deaminase activity"/>
    <property type="evidence" value="ECO:0007669"/>
    <property type="project" value="UniProtKB-UniRule"/>
</dbReference>
<dbReference type="GO" id="GO:0042802">
    <property type="term" value="F:identical protein binding"/>
    <property type="evidence" value="ECO:0007669"/>
    <property type="project" value="TreeGrafter"/>
</dbReference>
<dbReference type="GO" id="GO:0005975">
    <property type="term" value="P:carbohydrate metabolic process"/>
    <property type="evidence" value="ECO:0007669"/>
    <property type="project" value="InterPro"/>
</dbReference>
<dbReference type="GO" id="GO:0006043">
    <property type="term" value="P:glucosamine catabolic process"/>
    <property type="evidence" value="ECO:0007669"/>
    <property type="project" value="TreeGrafter"/>
</dbReference>
<dbReference type="GO" id="GO:0006046">
    <property type="term" value="P:N-acetylglucosamine catabolic process"/>
    <property type="evidence" value="ECO:0007669"/>
    <property type="project" value="TreeGrafter"/>
</dbReference>
<dbReference type="GO" id="GO:0019262">
    <property type="term" value="P:N-acetylneuraminate catabolic process"/>
    <property type="evidence" value="ECO:0007669"/>
    <property type="project" value="UniProtKB-UniRule"/>
</dbReference>
<dbReference type="CDD" id="cd01399">
    <property type="entry name" value="GlcN6P_deaminase"/>
    <property type="match status" value="1"/>
</dbReference>
<dbReference type="FunFam" id="3.40.50.1360:FF:000003">
    <property type="entry name" value="Glucosamine-6-phosphate deaminase"/>
    <property type="match status" value="1"/>
</dbReference>
<dbReference type="Gene3D" id="3.40.50.1360">
    <property type="match status" value="1"/>
</dbReference>
<dbReference type="HAMAP" id="MF_01241">
    <property type="entry name" value="GlcN6P_deamin"/>
    <property type="match status" value="1"/>
</dbReference>
<dbReference type="InterPro" id="IPR006148">
    <property type="entry name" value="Glc/Gal-6P_isomerase"/>
</dbReference>
<dbReference type="InterPro" id="IPR004547">
    <property type="entry name" value="Glucosamine6P_isomerase"/>
</dbReference>
<dbReference type="InterPro" id="IPR018321">
    <property type="entry name" value="Glucosamine6P_isomerase_CS"/>
</dbReference>
<dbReference type="InterPro" id="IPR037171">
    <property type="entry name" value="NagB/RpiA_transferase-like"/>
</dbReference>
<dbReference type="NCBIfam" id="TIGR00502">
    <property type="entry name" value="nagB"/>
    <property type="match status" value="1"/>
</dbReference>
<dbReference type="NCBIfam" id="NF001682">
    <property type="entry name" value="PRK00443.1-1"/>
    <property type="match status" value="1"/>
</dbReference>
<dbReference type="PANTHER" id="PTHR11280">
    <property type="entry name" value="GLUCOSAMINE-6-PHOSPHATE ISOMERASE"/>
    <property type="match status" value="1"/>
</dbReference>
<dbReference type="PANTHER" id="PTHR11280:SF5">
    <property type="entry name" value="GLUCOSAMINE-6-PHOSPHATE ISOMERASE"/>
    <property type="match status" value="1"/>
</dbReference>
<dbReference type="Pfam" id="PF01182">
    <property type="entry name" value="Glucosamine_iso"/>
    <property type="match status" value="1"/>
</dbReference>
<dbReference type="SUPFAM" id="SSF100950">
    <property type="entry name" value="NagB/RpiA/CoA transferase-like"/>
    <property type="match status" value="1"/>
</dbReference>
<dbReference type="PROSITE" id="PS01161">
    <property type="entry name" value="GLC_GALNAC_ISOMERASE"/>
    <property type="match status" value="1"/>
</dbReference>
<sequence>MNILVVKTPEELAEAGYKLIEEVVKTKENPTLGMATGSSPLGIYAEMRKNKLDTSRVTTVNLDEYVNLPHEDKNSYHYFMQEQLFDHLPFKQTYVPNGMASDLEEECKRYEGILAANPVDLQILGIGENGHIGFNEPGTPFNSPTNIVELTESTRQANLRFFEKEEDVPTHAITMGIGSIMKAKQILLVAMGSKKAEAVKELLQGAYSEACPATVLQRHPNVTVIADQEALSLCSEAIADEHRQVFTISDLLSDSRVGETAN</sequence>
<proteinExistence type="inferred from homology"/>
<gene>
    <name evidence="1" type="primary">nagB</name>
    <name type="ordered locus">BAA_4296</name>
</gene>
<feature type="chain" id="PRO_1000165009" description="Glucosamine-6-phosphate deaminase">
    <location>
        <begin position="1"/>
        <end position="262"/>
    </location>
</feature>
<feature type="active site" description="Proton acceptor; for enolization step" evidence="1">
    <location>
        <position position="63"/>
    </location>
</feature>
<feature type="active site" description="For ring-opening step" evidence="1">
    <location>
        <position position="129"/>
    </location>
</feature>
<feature type="active site" description="Proton acceptor; for ring-opening step" evidence="1">
    <location>
        <position position="131"/>
    </location>
</feature>
<feature type="active site" description="For ring-opening step" evidence="1">
    <location>
        <position position="136"/>
    </location>
</feature>